<sequence length="586" mass="67604">MGGLEKKKYERGSATNYITRNKARKKLQLSLPDFRRLCILKGIYPHEPKHKKKVNKGSTAARTFYLIKDIKFLLHEPIVNKFREYKVFVRKLRKAYGKSEWNAVERLKDNKPSYKLDHIVKERYPTFIDALRDLDDALSMCFLFSTFPRTGKCHVQTIQLCRRLTVEFMHYVIAARALRKVFLSIKGIYYQAEVLGQPIVWIAPYAFSHDHPTDVDYRVMATFTEFYTTLLGFVNFRLYQSLNLHYPPKIESQAQAEMKVSEDTYALDSESSMEKLAALSASLARVVVPAVEEAEADEFPTDGEVTAQEEDRRKELEAQEKHKKLFEGLKFFLNREVPREALAFIIRSFGGDVSWDKSLCIGATYDSTDSGITHQIVDRPGQQTPIIGRYYVQPQWVFDCVNARLLLPVAEYFPGVQLPPHLSPFVSEKEGDYIPPEKLKLLALQRGEDPGNLEEEEEDEDDEGDDSEGDGDVAVENEEEVVEAESEEEEEAHLSALEQQRLGGKKPQVMAGTVKLEDRQRLAQEEESEAKRLAIMMMKKREKYLYQKIMFGKRRKIREANKLAEKRKAHDDAVRSEKKAKRTRPV</sequence>
<gene>
    <name type="primary">Pes1</name>
</gene>
<dbReference type="EMBL" id="BC105910">
    <property type="protein sequence ID" value="AAI05911.1"/>
    <property type="molecule type" value="mRNA"/>
</dbReference>
<dbReference type="RefSeq" id="NP_001037693.1">
    <property type="nucleotide sequence ID" value="NM_001044228.1"/>
</dbReference>
<dbReference type="SMR" id="Q3B8N8"/>
<dbReference type="FunCoup" id="Q3B8N8">
    <property type="interactions" value="4116"/>
</dbReference>
<dbReference type="STRING" id="10116.ENSRNOP00000005996"/>
<dbReference type="iPTMnet" id="Q3B8N8"/>
<dbReference type="PhosphoSitePlus" id="Q3B8N8"/>
<dbReference type="jPOST" id="Q3B8N8"/>
<dbReference type="PaxDb" id="10116-ENSRNOP00000005996"/>
<dbReference type="Ensembl" id="ENSRNOT00000005996.5">
    <property type="protein sequence ID" value="ENSRNOP00000005996.3"/>
    <property type="gene ID" value="ENSRNOG00000004515.5"/>
</dbReference>
<dbReference type="GeneID" id="289740"/>
<dbReference type="KEGG" id="rno:289740"/>
<dbReference type="UCSC" id="RGD:1559814">
    <property type="organism name" value="rat"/>
</dbReference>
<dbReference type="AGR" id="RGD:1559814"/>
<dbReference type="CTD" id="23481"/>
<dbReference type="RGD" id="1559814">
    <property type="gene designation" value="Pes1"/>
</dbReference>
<dbReference type="eggNOG" id="KOG2481">
    <property type="taxonomic scope" value="Eukaryota"/>
</dbReference>
<dbReference type="GeneTree" id="ENSGT00390000002626"/>
<dbReference type="HOGENOM" id="CLU_019619_0_0_1"/>
<dbReference type="InParanoid" id="Q3B8N8"/>
<dbReference type="OrthoDB" id="55018at9989"/>
<dbReference type="PhylomeDB" id="Q3B8N8"/>
<dbReference type="TreeFam" id="TF300671"/>
<dbReference type="Reactome" id="R-RNO-6791226">
    <property type="pathway name" value="Major pathway of rRNA processing in the nucleolus and cytosol"/>
</dbReference>
<dbReference type="PRO" id="PR:Q3B8N8"/>
<dbReference type="Proteomes" id="UP000002494">
    <property type="component" value="Chromosome 14"/>
</dbReference>
<dbReference type="Bgee" id="ENSRNOG00000004515">
    <property type="expression patterns" value="Expressed in spleen and 20 other cell types or tissues"/>
</dbReference>
<dbReference type="GO" id="GO:0000793">
    <property type="term" value="C:condensed chromosome"/>
    <property type="evidence" value="ECO:0000266"/>
    <property type="project" value="RGD"/>
</dbReference>
<dbReference type="GO" id="GO:0005730">
    <property type="term" value="C:nucleolus"/>
    <property type="evidence" value="ECO:0000250"/>
    <property type="project" value="UniProtKB"/>
</dbReference>
<dbReference type="GO" id="GO:0005654">
    <property type="term" value="C:nucleoplasm"/>
    <property type="evidence" value="ECO:0000250"/>
    <property type="project" value="UniProtKB"/>
</dbReference>
<dbReference type="GO" id="GO:0005634">
    <property type="term" value="C:nucleus"/>
    <property type="evidence" value="ECO:0000266"/>
    <property type="project" value="RGD"/>
</dbReference>
<dbReference type="GO" id="GO:0070545">
    <property type="term" value="C:PeBoW complex"/>
    <property type="evidence" value="ECO:0000250"/>
    <property type="project" value="UniProtKB"/>
</dbReference>
<dbReference type="GO" id="GO:0030687">
    <property type="term" value="C:preribosome, large subunit precursor"/>
    <property type="evidence" value="ECO:0000250"/>
    <property type="project" value="UniProtKB"/>
</dbReference>
<dbReference type="GO" id="GO:0043021">
    <property type="term" value="F:ribonucleoprotein complex binding"/>
    <property type="evidence" value="ECO:0007669"/>
    <property type="project" value="UniProtKB-UniRule"/>
</dbReference>
<dbReference type="GO" id="GO:0003723">
    <property type="term" value="F:RNA binding"/>
    <property type="evidence" value="ECO:0000318"/>
    <property type="project" value="GO_Central"/>
</dbReference>
<dbReference type="GO" id="GO:0008283">
    <property type="term" value="P:cell population proliferation"/>
    <property type="evidence" value="ECO:0000266"/>
    <property type="project" value="RGD"/>
</dbReference>
<dbReference type="GO" id="GO:0000466">
    <property type="term" value="P:maturation of 5.8S rRNA from tricistronic rRNA transcript (SSU-rRNA, 5.8S rRNA, LSU-rRNA)"/>
    <property type="evidence" value="ECO:0000250"/>
    <property type="project" value="UniProtKB"/>
</dbReference>
<dbReference type="GO" id="GO:0000463">
    <property type="term" value="P:maturation of LSU-rRNA from tricistronic rRNA transcript (SSU-rRNA, 5.8S rRNA, LSU-rRNA)"/>
    <property type="evidence" value="ECO:0000250"/>
    <property type="project" value="UniProtKB"/>
</dbReference>
<dbReference type="GO" id="GO:0007000">
    <property type="term" value="P:nucleolus organization"/>
    <property type="evidence" value="ECO:0000266"/>
    <property type="project" value="RGD"/>
</dbReference>
<dbReference type="GO" id="GO:0033365">
    <property type="term" value="P:protein localization to organelle"/>
    <property type="evidence" value="ECO:0000266"/>
    <property type="project" value="RGD"/>
</dbReference>
<dbReference type="GO" id="GO:0051726">
    <property type="term" value="P:regulation of cell cycle"/>
    <property type="evidence" value="ECO:0000250"/>
    <property type="project" value="UniProtKB"/>
</dbReference>
<dbReference type="GO" id="GO:0042254">
    <property type="term" value="P:ribosome biogenesis"/>
    <property type="evidence" value="ECO:0000266"/>
    <property type="project" value="RGD"/>
</dbReference>
<dbReference type="GO" id="GO:0006364">
    <property type="term" value="P:rRNA processing"/>
    <property type="evidence" value="ECO:0000266"/>
    <property type="project" value="RGD"/>
</dbReference>
<dbReference type="CDD" id="cd17709">
    <property type="entry name" value="BRCT_pescadillo_like"/>
    <property type="match status" value="1"/>
</dbReference>
<dbReference type="FunFam" id="3.40.50.10190:FF:000002">
    <property type="entry name" value="Pescadillo homolog"/>
    <property type="match status" value="1"/>
</dbReference>
<dbReference type="Gene3D" id="3.40.50.10190">
    <property type="entry name" value="BRCT domain"/>
    <property type="match status" value="1"/>
</dbReference>
<dbReference type="HAMAP" id="MF_03028">
    <property type="entry name" value="Pescadillo"/>
    <property type="match status" value="1"/>
</dbReference>
<dbReference type="InterPro" id="IPR001357">
    <property type="entry name" value="BRCT_dom"/>
</dbReference>
<dbReference type="InterPro" id="IPR036420">
    <property type="entry name" value="BRCT_dom_sf"/>
</dbReference>
<dbReference type="InterPro" id="IPR010613">
    <property type="entry name" value="PES"/>
</dbReference>
<dbReference type="PANTHER" id="PTHR12221">
    <property type="entry name" value="PESCADILLO - RELATED"/>
    <property type="match status" value="1"/>
</dbReference>
<dbReference type="PANTHER" id="PTHR12221:SF6">
    <property type="entry name" value="PESCADILLO HOMOLOG"/>
    <property type="match status" value="1"/>
</dbReference>
<dbReference type="Pfam" id="PF16589">
    <property type="entry name" value="BRCT_2"/>
    <property type="match status" value="1"/>
</dbReference>
<dbReference type="Pfam" id="PF06732">
    <property type="entry name" value="Pescadillo_N"/>
    <property type="match status" value="1"/>
</dbReference>
<dbReference type="SMART" id="SM00292">
    <property type="entry name" value="BRCT"/>
    <property type="match status" value="1"/>
</dbReference>
<dbReference type="SUPFAM" id="SSF52113">
    <property type="entry name" value="BRCT domain"/>
    <property type="match status" value="1"/>
</dbReference>
<dbReference type="PROSITE" id="PS50172">
    <property type="entry name" value="BRCT"/>
    <property type="match status" value="1"/>
</dbReference>
<name>PESC_RAT</name>
<feature type="chain" id="PRO_0000370445" description="Pescadillo homolog">
    <location>
        <begin position="1"/>
        <end position="586"/>
    </location>
</feature>
<feature type="domain" description="BRCT" evidence="3">
    <location>
        <begin position="321"/>
        <end position="414"/>
    </location>
</feature>
<feature type="region of interest" description="Sufficient for nucleolar localization" evidence="1">
    <location>
        <begin position="1"/>
        <end position="257"/>
    </location>
</feature>
<feature type="region of interest" description="Required for 28S ribosomal RNA processing" evidence="1">
    <location>
        <begin position="1"/>
        <end position="54"/>
    </location>
</feature>
<feature type="region of interest" description="Sufficient for interaction with MAP1B" evidence="1">
    <location>
        <begin position="305"/>
        <end position="414"/>
    </location>
</feature>
<feature type="region of interest" description="Disordered" evidence="4">
    <location>
        <begin position="447"/>
        <end position="508"/>
    </location>
</feature>
<feature type="region of interest" description="Required for 28S ribosomal RNA processing" evidence="1">
    <location>
        <begin position="537"/>
        <end position="586"/>
    </location>
</feature>
<feature type="region of interest" description="Disordered" evidence="4">
    <location>
        <begin position="562"/>
        <end position="586"/>
    </location>
</feature>
<feature type="compositionally biased region" description="Acidic residues" evidence="4">
    <location>
        <begin position="451"/>
        <end position="491"/>
    </location>
</feature>
<feature type="compositionally biased region" description="Basic and acidic residues" evidence="4">
    <location>
        <begin position="562"/>
        <end position="577"/>
    </location>
</feature>
<feature type="modified residue" description="N6-acetyllysine" evidence="2">
    <location>
        <position position="98"/>
    </location>
</feature>
<feature type="cross-link" description="Glycyl lysine isopeptide (Lys-Gly) (interchain with G-Cter in SUMO1); alternate" evidence="2">
    <location>
        <position position="515"/>
    </location>
</feature>
<feature type="cross-link" description="Glycyl lysine isopeptide (Lys-Gly) (interchain with G-Cter in SUMO2); alternate" evidence="2">
    <location>
        <position position="515"/>
    </location>
</feature>
<reference key="1">
    <citation type="journal article" date="2004" name="Genome Res.">
        <title>The status, quality, and expansion of the NIH full-length cDNA project: the Mammalian Gene Collection (MGC).</title>
        <authorList>
            <consortium name="The MGC Project Team"/>
        </authorList>
    </citation>
    <scope>NUCLEOTIDE SEQUENCE [LARGE SCALE MRNA]</scope>
    <source>
        <tissue>Thymus</tissue>
    </source>
</reference>
<organism>
    <name type="scientific">Rattus norvegicus</name>
    <name type="common">Rat</name>
    <dbReference type="NCBI Taxonomy" id="10116"/>
    <lineage>
        <taxon>Eukaryota</taxon>
        <taxon>Metazoa</taxon>
        <taxon>Chordata</taxon>
        <taxon>Craniata</taxon>
        <taxon>Vertebrata</taxon>
        <taxon>Euteleostomi</taxon>
        <taxon>Mammalia</taxon>
        <taxon>Eutheria</taxon>
        <taxon>Euarchontoglires</taxon>
        <taxon>Glires</taxon>
        <taxon>Rodentia</taxon>
        <taxon>Myomorpha</taxon>
        <taxon>Muroidea</taxon>
        <taxon>Muridae</taxon>
        <taxon>Murinae</taxon>
        <taxon>Rattus</taxon>
    </lineage>
</organism>
<keyword id="KW-0007">Acetylation</keyword>
<keyword id="KW-0158">Chromosome</keyword>
<keyword id="KW-1017">Isopeptide bond</keyword>
<keyword id="KW-0539">Nucleus</keyword>
<keyword id="KW-1185">Reference proteome</keyword>
<keyword id="KW-0690">Ribosome biogenesis</keyword>
<keyword id="KW-0698">rRNA processing</keyword>
<keyword id="KW-0832">Ubl conjugation</keyword>
<protein>
    <recommendedName>
        <fullName evidence="3">Pescadillo homolog</fullName>
    </recommendedName>
</protein>
<proteinExistence type="evidence at transcript level"/>
<evidence type="ECO:0000250" key="1"/>
<evidence type="ECO:0000250" key="2">
    <source>
        <dbReference type="UniProtKB" id="O00541"/>
    </source>
</evidence>
<evidence type="ECO:0000255" key="3">
    <source>
        <dbReference type="HAMAP-Rule" id="MF_03028"/>
    </source>
</evidence>
<evidence type="ECO:0000256" key="4">
    <source>
        <dbReference type="SAM" id="MobiDB-lite"/>
    </source>
</evidence>
<accession>Q3B8N8</accession>
<comment type="function">
    <text evidence="3">Component of the PeBoW complex, which is required for maturation of 28S and 5.8S ribosomal RNAs and formation of the 60S ribosome.</text>
</comment>
<comment type="subunit">
    <text evidence="3">Component of the PeBoW complex, composed of BOP1, PES1 and WDR12. The complex is held together by BOP1, which interacts with PES1 via its N-terminal domain and with WDR12 via a high-affinity interaction between the seven-bladed beta-propeller domains of the 2 proteins. The PeBoW complex associates with the 66S pre-ribosome. The PeBoW complex also associates with DDX27, PES1 interacts directly with DDX27. Interacts with IRS1 and UBTF. May interact with MAP1B.</text>
</comment>
<comment type="subcellular location">
    <subcellularLocation>
        <location evidence="3">Nucleus</location>
        <location evidence="3">Nucleolus</location>
    </subcellularLocation>
    <subcellularLocation>
        <location evidence="3">Nucleus</location>
        <location evidence="3">Nucleoplasm</location>
    </subcellularLocation>
    <subcellularLocation>
        <location evidence="3">Chromosome</location>
    </subcellularLocation>
    <text>Appears to localize to the periphery of metaphase chromosomes during mitosis and to the prenucleolar bodies that form in mitotic cells prior to the actual nucleoli.</text>
</comment>
<comment type="PTM">
    <text evidence="3">Sumoylated.</text>
</comment>
<comment type="similarity">
    <text evidence="3">Belongs to the pescadillo family.</text>
</comment>